<name>SR140_PONAB</name>
<accession>Q5R7X2</accession>
<protein>
    <recommendedName>
        <fullName>U2 snRNP-associated SURP motif-containing protein</fullName>
    </recommendedName>
    <alternativeName>
        <fullName>140 kDa Ser/Arg-rich domain protein</fullName>
    </alternativeName>
    <alternativeName>
        <fullName>U2-associated protein SR140</fullName>
    </alternativeName>
</protein>
<dbReference type="EMBL" id="CR859987">
    <property type="protein sequence ID" value="CAH92138.1"/>
    <property type="molecule type" value="mRNA"/>
</dbReference>
<dbReference type="RefSeq" id="NP_001127512.1">
    <property type="nucleotide sequence ID" value="NM_001134040.1"/>
</dbReference>
<dbReference type="SMR" id="Q5R7X2"/>
<dbReference type="FunCoup" id="Q5R7X2">
    <property type="interactions" value="4798"/>
</dbReference>
<dbReference type="STRING" id="9601.ENSPPYP00000015859"/>
<dbReference type="GeneID" id="100174588"/>
<dbReference type="KEGG" id="pon:100174588"/>
<dbReference type="CTD" id="23350"/>
<dbReference type="eggNOG" id="KOG0151">
    <property type="taxonomic scope" value="Eukaryota"/>
</dbReference>
<dbReference type="InParanoid" id="Q5R7X2"/>
<dbReference type="OrthoDB" id="377209at2759"/>
<dbReference type="Proteomes" id="UP000001595">
    <property type="component" value="Unplaced"/>
</dbReference>
<dbReference type="GO" id="GO:0005634">
    <property type="term" value="C:nucleus"/>
    <property type="evidence" value="ECO:0007669"/>
    <property type="project" value="UniProtKB-SubCell"/>
</dbReference>
<dbReference type="GO" id="GO:0003723">
    <property type="term" value="F:RNA binding"/>
    <property type="evidence" value="ECO:0007669"/>
    <property type="project" value="UniProtKB-KW"/>
</dbReference>
<dbReference type="GO" id="GO:0006396">
    <property type="term" value="P:RNA processing"/>
    <property type="evidence" value="ECO:0007669"/>
    <property type="project" value="InterPro"/>
</dbReference>
<dbReference type="CDD" id="cd21370">
    <property type="entry name" value="cwf21_SR140"/>
    <property type="match status" value="1"/>
</dbReference>
<dbReference type="CDD" id="cd12223">
    <property type="entry name" value="RRM_SR140"/>
    <property type="match status" value="1"/>
</dbReference>
<dbReference type="FunFam" id="1.10.10.790:FF:000006">
    <property type="entry name" value="U2 snRNP-associated SURP motif-containing protein isoform X1"/>
    <property type="match status" value="1"/>
</dbReference>
<dbReference type="FunFam" id="1.25.40.90:FF:000013">
    <property type="entry name" value="U2 snRNP-associated SURP motif-containing protein isoform X1"/>
    <property type="match status" value="1"/>
</dbReference>
<dbReference type="FunFam" id="3.30.70.330:FF:000177">
    <property type="entry name" value="U2 snRNP-associated SURP motif-containing protein-like isoform X2"/>
    <property type="match status" value="1"/>
</dbReference>
<dbReference type="Gene3D" id="1.25.40.90">
    <property type="match status" value="1"/>
</dbReference>
<dbReference type="Gene3D" id="3.30.70.330">
    <property type="match status" value="1"/>
</dbReference>
<dbReference type="Gene3D" id="6.10.140.420">
    <property type="match status" value="1"/>
</dbReference>
<dbReference type="Gene3D" id="1.10.10.790">
    <property type="entry name" value="Surp module"/>
    <property type="match status" value="1"/>
</dbReference>
<dbReference type="InterPro" id="IPR006569">
    <property type="entry name" value="CID_dom"/>
</dbReference>
<dbReference type="InterPro" id="IPR008942">
    <property type="entry name" value="ENTH_VHS"/>
</dbReference>
<dbReference type="InterPro" id="IPR013170">
    <property type="entry name" value="mRNA_splic_Cwf21_dom"/>
</dbReference>
<dbReference type="InterPro" id="IPR012677">
    <property type="entry name" value="Nucleotide-bd_a/b_plait_sf"/>
</dbReference>
<dbReference type="InterPro" id="IPR035979">
    <property type="entry name" value="RBD_domain_sf"/>
</dbReference>
<dbReference type="InterPro" id="IPR000504">
    <property type="entry name" value="RRM_dom"/>
</dbReference>
<dbReference type="InterPro" id="IPR051485">
    <property type="entry name" value="SR-CTD_assoc_factor"/>
</dbReference>
<dbReference type="InterPro" id="IPR047488">
    <property type="entry name" value="SR140_cwf21"/>
</dbReference>
<dbReference type="InterPro" id="IPR035009">
    <property type="entry name" value="SR140_RRM"/>
</dbReference>
<dbReference type="InterPro" id="IPR000061">
    <property type="entry name" value="Surp"/>
</dbReference>
<dbReference type="InterPro" id="IPR035967">
    <property type="entry name" value="SWAP/Surp_sf"/>
</dbReference>
<dbReference type="PANTHER" id="PTHR23140">
    <property type="entry name" value="RNA PROCESSING PROTEIN LD23810P"/>
    <property type="match status" value="1"/>
</dbReference>
<dbReference type="PANTHER" id="PTHR23140:SF0">
    <property type="entry name" value="U2 SNRNP-ASSOCIATED SURP MOTIF-CONTAINING PROTEIN"/>
    <property type="match status" value="1"/>
</dbReference>
<dbReference type="Pfam" id="PF04818">
    <property type="entry name" value="CID"/>
    <property type="match status" value="1"/>
</dbReference>
<dbReference type="Pfam" id="PF08312">
    <property type="entry name" value="cwf21"/>
    <property type="match status" value="1"/>
</dbReference>
<dbReference type="Pfam" id="PF00076">
    <property type="entry name" value="RRM_1"/>
    <property type="match status" value="1"/>
</dbReference>
<dbReference type="Pfam" id="PF01805">
    <property type="entry name" value="Surp"/>
    <property type="match status" value="1"/>
</dbReference>
<dbReference type="SMART" id="SM01115">
    <property type="entry name" value="cwf21"/>
    <property type="match status" value="1"/>
</dbReference>
<dbReference type="SMART" id="SM00582">
    <property type="entry name" value="RPR"/>
    <property type="match status" value="1"/>
</dbReference>
<dbReference type="SMART" id="SM00360">
    <property type="entry name" value="RRM"/>
    <property type="match status" value="1"/>
</dbReference>
<dbReference type="SMART" id="SM00648">
    <property type="entry name" value="SWAP"/>
    <property type="match status" value="1"/>
</dbReference>
<dbReference type="SUPFAM" id="SSF48464">
    <property type="entry name" value="ENTH/VHS domain"/>
    <property type="match status" value="1"/>
</dbReference>
<dbReference type="SUPFAM" id="SSF54928">
    <property type="entry name" value="RNA-binding domain, RBD"/>
    <property type="match status" value="1"/>
</dbReference>
<dbReference type="SUPFAM" id="SSF109905">
    <property type="entry name" value="Surp module (SWAP domain)"/>
    <property type="match status" value="1"/>
</dbReference>
<dbReference type="PROSITE" id="PS51391">
    <property type="entry name" value="CID"/>
    <property type="match status" value="1"/>
</dbReference>
<dbReference type="PROSITE" id="PS50102">
    <property type="entry name" value="RRM"/>
    <property type="match status" value="1"/>
</dbReference>
<dbReference type="PROSITE" id="PS50128">
    <property type="entry name" value="SURP"/>
    <property type="match status" value="1"/>
</dbReference>
<reference key="1">
    <citation type="submission" date="2004-11" db="EMBL/GenBank/DDBJ databases">
        <authorList>
            <consortium name="The German cDNA consortium"/>
        </authorList>
    </citation>
    <scope>NUCLEOTIDE SEQUENCE [LARGE SCALE MRNA]</scope>
    <source>
        <tissue>Brain cortex</tissue>
    </source>
</reference>
<comment type="subunit">
    <text evidence="1">Interacts with ERBB4.</text>
</comment>
<comment type="subcellular location">
    <subcellularLocation>
        <location evidence="1">Nucleus</location>
    </subcellularLocation>
</comment>
<comment type="similarity">
    <text evidence="7">Belongs to the splicing factor SR family.</text>
</comment>
<proteinExistence type="evidence at transcript level"/>
<gene>
    <name type="primary">U2SURP</name>
    <name type="synonym">SR140</name>
</gene>
<keyword id="KW-0007">Acetylation</keyword>
<keyword id="KW-0175">Coiled coil</keyword>
<keyword id="KW-1017">Isopeptide bond</keyword>
<keyword id="KW-0539">Nucleus</keyword>
<keyword id="KW-0597">Phosphoprotein</keyword>
<keyword id="KW-1185">Reference proteome</keyword>
<keyword id="KW-0694">RNA-binding</keyword>
<keyword id="KW-0832">Ubl conjugation</keyword>
<feature type="initiator methionine" description="Removed" evidence="2">
    <location>
        <position position="1"/>
    </location>
</feature>
<feature type="chain" id="PRO_0000280072" description="U2 snRNP-associated SURP motif-containing protein">
    <location>
        <begin position="2"/>
        <end position="1028"/>
    </location>
</feature>
<feature type="domain" description="RRM" evidence="4">
    <location>
        <begin position="273"/>
        <end position="354"/>
    </location>
</feature>
<feature type="repeat" description="SURP motif">
    <location>
        <begin position="429"/>
        <end position="472"/>
    </location>
</feature>
<feature type="domain" description="CID" evidence="5">
    <location>
        <begin position="533"/>
        <end position="678"/>
    </location>
</feature>
<feature type="region of interest" description="Disordered" evidence="6">
    <location>
        <begin position="1"/>
        <end position="111"/>
    </location>
</feature>
<feature type="region of interest" description="Disordered" evidence="6">
    <location>
        <begin position="141"/>
        <end position="272"/>
    </location>
</feature>
<feature type="region of interest" description="Disordered" evidence="6">
    <location>
        <begin position="777"/>
        <end position="840"/>
    </location>
</feature>
<feature type="region of interest" description="Disordered" evidence="6">
    <location>
        <begin position="854"/>
        <end position="1028"/>
    </location>
</feature>
<feature type="coiled-coil region" evidence="3">
    <location>
        <begin position="92"/>
        <end position="121"/>
    </location>
</feature>
<feature type="coiled-coil region" evidence="3">
    <location>
        <begin position="192"/>
        <end position="232"/>
    </location>
</feature>
<feature type="coiled-coil region" evidence="3">
    <location>
        <begin position="779"/>
        <end position="809"/>
    </location>
</feature>
<feature type="coiled-coil region" evidence="3">
    <location>
        <begin position="836"/>
        <end position="914"/>
    </location>
</feature>
<feature type="compositionally biased region" description="Polar residues" evidence="6">
    <location>
        <begin position="7"/>
        <end position="16"/>
    </location>
</feature>
<feature type="compositionally biased region" description="Basic residues" evidence="6">
    <location>
        <begin position="45"/>
        <end position="54"/>
    </location>
</feature>
<feature type="compositionally biased region" description="Basic and acidic residues" evidence="6">
    <location>
        <begin position="55"/>
        <end position="64"/>
    </location>
</feature>
<feature type="compositionally biased region" description="Basic and acidic residues" evidence="6">
    <location>
        <begin position="97"/>
        <end position="111"/>
    </location>
</feature>
<feature type="compositionally biased region" description="Basic and acidic residues" evidence="6">
    <location>
        <begin position="144"/>
        <end position="155"/>
    </location>
</feature>
<feature type="compositionally biased region" description="Polar residues" evidence="6">
    <location>
        <begin position="169"/>
        <end position="178"/>
    </location>
</feature>
<feature type="compositionally biased region" description="Basic and acidic residues" evidence="6">
    <location>
        <begin position="186"/>
        <end position="222"/>
    </location>
</feature>
<feature type="compositionally biased region" description="Basic and acidic residues" evidence="6">
    <location>
        <begin position="239"/>
        <end position="249"/>
    </location>
</feature>
<feature type="compositionally biased region" description="Acidic residues" evidence="6">
    <location>
        <begin position="785"/>
        <end position="805"/>
    </location>
</feature>
<feature type="compositionally biased region" description="Basic and acidic residues" evidence="6">
    <location>
        <begin position="809"/>
        <end position="840"/>
    </location>
</feature>
<feature type="compositionally biased region" description="Basic and acidic residues" evidence="6">
    <location>
        <begin position="873"/>
        <end position="921"/>
    </location>
</feature>
<feature type="compositionally biased region" description="Basic and acidic residues" evidence="6">
    <location>
        <begin position="949"/>
        <end position="979"/>
    </location>
</feature>
<feature type="compositionally biased region" description="Basic residues" evidence="6">
    <location>
        <begin position="990"/>
        <end position="1028"/>
    </location>
</feature>
<feature type="modified residue" description="N-acetylalanine" evidence="2">
    <location>
        <position position="2"/>
    </location>
</feature>
<feature type="modified residue" description="Phosphoserine" evidence="2">
    <location>
        <position position="67"/>
    </location>
</feature>
<feature type="modified residue" description="Phosphoserine" evidence="2">
    <location>
        <position position="202"/>
    </location>
</feature>
<feature type="modified residue" description="Phosphoserine" evidence="2">
    <location>
        <position position="236"/>
    </location>
</feature>
<feature type="modified residue" description="Phosphoserine" evidence="2">
    <location>
        <position position="484"/>
    </location>
</feature>
<feature type="modified residue" description="Phosphothreonine" evidence="2">
    <location>
        <position position="718"/>
    </location>
</feature>
<feature type="modified residue" description="N6-acetyllysine; alternate" evidence="2">
    <location>
        <position position="759"/>
    </location>
</feature>
<feature type="modified residue" description="Phosphoserine" evidence="2">
    <location>
        <position position="787"/>
    </location>
</feature>
<feature type="modified residue" description="Phosphoserine" evidence="2">
    <location>
        <position position="799"/>
    </location>
</feature>
<feature type="modified residue" description="Phosphoserine" evidence="2">
    <location>
        <position position="810"/>
    </location>
</feature>
<feature type="modified residue" description="Phosphothreonine" evidence="2">
    <location>
        <position position="930"/>
    </location>
</feature>
<feature type="modified residue" description="Phosphoserine" evidence="2">
    <location>
        <position position="945"/>
    </location>
</feature>
<feature type="modified residue" description="Phosphoserine" evidence="2">
    <location>
        <position position="947"/>
    </location>
</feature>
<feature type="cross-link" description="Glycyl lysine isopeptide (Lys-Gly) (interchain with G-Cter in SUMO2)" evidence="2">
    <location>
        <position position="80"/>
    </location>
</feature>
<feature type="cross-link" description="Glycyl lysine isopeptide (Lys-Gly) (interchain with G-Cter in SUMO2)" evidence="2">
    <location>
        <position position="145"/>
    </location>
</feature>
<feature type="cross-link" description="Glycyl lysine isopeptide (Lys-Gly) (interchain with G-Cter in SUMO2)" evidence="2">
    <location>
        <position position="168"/>
    </location>
</feature>
<feature type="cross-link" description="Glycyl lysine isopeptide (Lys-Gly) (interchain with G-Cter in SUMO2)" evidence="2">
    <location>
        <position position="208"/>
    </location>
</feature>
<feature type="cross-link" description="Glycyl lysine isopeptide (Lys-Gly) (interchain with G-Cter in SUMO2)" evidence="2">
    <location>
        <position position="747"/>
    </location>
</feature>
<feature type="cross-link" description="Glycyl lysine isopeptide (Lys-Gly) (interchain with G-Cter in SUMO2)" evidence="2">
    <location>
        <position position="748"/>
    </location>
</feature>
<feature type="cross-link" description="Glycyl lysine isopeptide (Lys-Gly) (interchain with G-Cter in SUMO2); alternate" evidence="2">
    <location>
        <position position="759"/>
    </location>
</feature>
<feature type="cross-link" description="Glycyl lysine isopeptide (Lys-Gly) (interchain with G-Cter in SUMO2)" evidence="2">
    <location>
        <position position="821"/>
    </location>
</feature>
<feature type="cross-link" description="Glycyl lysine isopeptide (Lys-Gly) (interchain with G-Cter in SUMO2)" evidence="2">
    <location>
        <position position="828"/>
    </location>
</feature>
<feature type="cross-link" description="Glycyl lysine isopeptide (Lys-Gly) (interchain with G-Cter in SUMO2)" evidence="2">
    <location>
        <position position="831"/>
    </location>
</feature>
<evidence type="ECO:0000250" key="1"/>
<evidence type="ECO:0000250" key="2">
    <source>
        <dbReference type="UniProtKB" id="O15042"/>
    </source>
</evidence>
<evidence type="ECO:0000255" key="3"/>
<evidence type="ECO:0000255" key="4">
    <source>
        <dbReference type="PROSITE-ProRule" id="PRU00176"/>
    </source>
</evidence>
<evidence type="ECO:0000255" key="5">
    <source>
        <dbReference type="PROSITE-ProRule" id="PRU00724"/>
    </source>
</evidence>
<evidence type="ECO:0000256" key="6">
    <source>
        <dbReference type="SAM" id="MobiDB-lite"/>
    </source>
</evidence>
<evidence type="ECO:0000305" key="7"/>
<organism>
    <name type="scientific">Pongo abelii</name>
    <name type="common">Sumatran orangutan</name>
    <name type="synonym">Pongo pygmaeus abelii</name>
    <dbReference type="NCBI Taxonomy" id="9601"/>
    <lineage>
        <taxon>Eukaryota</taxon>
        <taxon>Metazoa</taxon>
        <taxon>Chordata</taxon>
        <taxon>Craniata</taxon>
        <taxon>Vertebrata</taxon>
        <taxon>Euteleostomi</taxon>
        <taxon>Mammalia</taxon>
        <taxon>Eutheria</taxon>
        <taxon>Euarchontoglires</taxon>
        <taxon>Primates</taxon>
        <taxon>Haplorrhini</taxon>
        <taxon>Catarrhini</taxon>
        <taxon>Hominidae</taxon>
        <taxon>Pongo</taxon>
    </lineage>
</organism>
<sequence>MADKTPGGSQKASSKTRSSDVHSSGSSDAHMDASGPSDSDMPSRTRPKSPRKHNYRNESARESLCDSPHQNLSRPLLENKLKAFSIGKMSTAKRTLSKKEQEELKKKEDEKAAAEIYEEFLAAFEGSDGNKVKTFVRGGVVNAAKEEHETDEKRGKIYKPSSRFADQKNPPNQSSNERPPSLLVIETKKPPLKKGEKEKKKSNLELFKEELKQIQEERDERHKTKGRLSRFEPPQSDSDGQRRSMDAPSRRNRSSVLDDYAPGSHDVGDPSTTNLYLGNINPQMNEEMLCQEFGRFGPLASVKIMWPRTDEERARERNCGFVAFMNRRDAERALKNLNGKMIMSFEMKLGWGKAVPIPPHPIYIPPSMMEHTLPPPPSGLPFNAQPRERLKNPNAPMLPPPKNKEDFEKTLSQAIVKVVIPTERNLLALIHRMIEFVVREGPMFEAMIMNREINNPMFRFLFENQTPAHVYYRWKLYSILQGDSPTKWRTEDFRMFKNGSFWRPPPLNPYLHGMSEEQETEAFVEEPSKKGALKEEQRDKLEEILRGLTPRKNDIGDAMVFCLNNAEAAEEIVDCITESLSILKTPLPKKIARLYLVSDVLYNSSAKVANASYYRKFFETKLCQIFSDLNATYRTIQGHLQSENFKQRVMTCFRAWEDWAIYPEPFLIKLQNIFLGLVNIIEEKETEDVPDDLDGAPIEEELDGAPLEDVDGIPIDATPIDDLDGVPIKSLDDDLDGVPLDATEDSKKNEPIFKVAPSKWEAVDESELEAQAVTTSKWELFDQHEESEEEENQNQEEESEDEEDTQSSKSEEHHLYSNPIKEEMTESKFSKYSEMSEEKRAKLREIELKVMKFQDELESGKRPKKPGQSFQEQVEHYRDKLLQREKEKELERERERDKKDKEKLESRSKDEKEKDECTPTRKERKRRHSTSPSPSRSSSGRRVKSPSPKSERSERSERSHKESSRSRSSHKDSPRDVSKKAKRSPSGSRTPKRSRRSRSRSPKKSGKKSRSQSRSPHRSHKKSKKNKH</sequence>